<feature type="transit peptide" description="Chloroplast" evidence="2">
    <location>
        <begin position="1"/>
        <end position="32"/>
    </location>
</feature>
<feature type="chain" id="PRO_0000401433" description="Stearoyl-[acyl-carrier-protein] 9-desaturase 5, chloroplastic">
    <location>
        <begin position="33"/>
        <end position="391"/>
    </location>
</feature>
<feature type="region of interest" description="Disordered" evidence="3">
    <location>
        <begin position="1"/>
        <end position="20"/>
    </location>
</feature>
<feature type="binding site" evidence="1">
    <location>
        <position position="133"/>
    </location>
    <ligand>
        <name>Fe cation</name>
        <dbReference type="ChEBI" id="CHEBI:24875"/>
        <label>1</label>
    </ligand>
</feature>
<feature type="binding site" evidence="1">
    <location>
        <position position="171"/>
    </location>
    <ligand>
        <name>Fe cation</name>
        <dbReference type="ChEBI" id="CHEBI:24875"/>
        <label>1</label>
    </ligand>
</feature>
<feature type="binding site" evidence="1">
    <location>
        <position position="171"/>
    </location>
    <ligand>
        <name>Fe cation</name>
        <dbReference type="ChEBI" id="CHEBI:24875"/>
        <label>2</label>
    </ligand>
</feature>
<feature type="binding site" evidence="1">
    <location>
        <position position="174"/>
    </location>
    <ligand>
        <name>Fe cation</name>
        <dbReference type="ChEBI" id="CHEBI:24875"/>
        <label>1</label>
    </ligand>
</feature>
<feature type="binding site" evidence="1">
    <location>
        <position position="224"/>
    </location>
    <ligand>
        <name>Fe cation</name>
        <dbReference type="ChEBI" id="CHEBI:24875"/>
        <label>2</label>
    </ligand>
</feature>
<feature type="binding site" evidence="1">
    <location>
        <position position="257"/>
    </location>
    <ligand>
        <name>Fe cation</name>
        <dbReference type="ChEBI" id="CHEBI:24875"/>
        <label>1</label>
    </ligand>
</feature>
<feature type="binding site" evidence="1">
    <location>
        <position position="257"/>
    </location>
    <ligand>
        <name>Fe cation</name>
        <dbReference type="ChEBI" id="CHEBI:24875"/>
        <label>2</label>
    </ligand>
</feature>
<feature type="binding site" evidence="1">
    <location>
        <position position="260"/>
    </location>
    <ligand>
        <name>Fe cation</name>
        <dbReference type="ChEBI" id="CHEBI:24875"/>
        <label>2</label>
    </ligand>
</feature>
<accession>A2XSL4</accession>
<proteinExistence type="inferred from homology"/>
<gene>
    <name type="ORF">OsI_15603</name>
</gene>
<reference key="1">
    <citation type="journal article" date="2005" name="PLoS Biol.">
        <title>The genomes of Oryza sativa: a history of duplications.</title>
        <authorList>
            <person name="Yu J."/>
            <person name="Wang J."/>
            <person name="Lin W."/>
            <person name="Li S."/>
            <person name="Li H."/>
            <person name="Zhou J."/>
            <person name="Ni P."/>
            <person name="Dong W."/>
            <person name="Hu S."/>
            <person name="Zeng C."/>
            <person name="Zhang J."/>
            <person name="Zhang Y."/>
            <person name="Li R."/>
            <person name="Xu Z."/>
            <person name="Li S."/>
            <person name="Li X."/>
            <person name="Zheng H."/>
            <person name="Cong L."/>
            <person name="Lin L."/>
            <person name="Yin J."/>
            <person name="Geng J."/>
            <person name="Li G."/>
            <person name="Shi J."/>
            <person name="Liu J."/>
            <person name="Lv H."/>
            <person name="Li J."/>
            <person name="Wang J."/>
            <person name="Deng Y."/>
            <person name="Ran L."/>
            <person name="Shi X."/>
            <person name="Wang X."/>
            <person name="Wu Q."/>
            <person name="Li C."/>
            <person name="Ren X."/>
            <person name="Wang J."/>
            <person name="Wang X."/>
            <person name="Li D."/>
            <person name="Liu D."/>
            <person name="Zhang X."/>
            <person name="Ji Z."/>
            <person name="Zhao W."/>
            <person name="Sun Y."/>
            <person name="Zhang Z."/>
            <person name="Bao J."/>
            <person name="Han Y."/>
            <person name="Dong L."/>
            <person name="Ji J."/>
            <person name="Chen P."/>
            <person name="Wu S."/>
            <person name="Liu J."/>
            <person name="Xiao Y."/>
            <person name="Bu D."/>
            <person name="Tan J."/>
            <person name="Yang L."/>
            <person name="Ye C."/>
            <person name="Zhang J."/>
            <person name="Xu J."/>
            <person name="Zhou Y."/>
            <person name="Yu Y."/>
            <person name="Zhang B."/>
            <person name="Zhuang S."/>
            <person name="Wei H."/>
            <person name="Liu B."/>
            <person name="Lei M."/>
            <person name="Yu H."/>
            <person name="Li Y."/>
            <person name="Xu H."/>
            <person name="Wei S."/>
            <person name="He X."/>
            <person name="Fang L."/>
            <person name="Zhang Z."/>
            <person name="Zhang Y."/>
            <person name="Huang X."/>
            <person name="Su Z."/>
            <person name="Tong W."/>
            <person name="Li J."/>
            <person name="Tong Z."/>
            <person name="Li S."/>
            <person name="Ye J."/>
            <person name="Wang L."/>
            <person name="Fang L."/>
            <person name="Lei T."/>
            <person name="Chen C.-S."/>
            <person name="Chen H.-C."/>
            <person name="Xu Z."/>
            <person name="Li H."/>
            <person name="Huang H."/>
            <person name="Zhang F."/>
            <person name="Xu H."/>
            <person name="Li N."/>
            <person name="Zhao C."/>
            <person name="Li S."/>
            <person name="Dong L."/>
            <person name="Huang Y."/>
            <person name="Li L."/>
            <person name="Xi Y."/>
            <person name="Qi Q."/>
            <person name="Li W."/>
            <person name="Zhang B."/>
            <person name="Hu W."/>
            <person name="Zhang Y."/>
            <person name="Tian X."/>
            <person name="Jiao Y."/>
            <person name="Liang X."/>
            <person name="Jin J."/>
            <person name="Gao L."/>
            <person name="Zheng W."/>
            <person name="Hao B."/>
            <person name="Liu S.-M."/>
            <person name="Wang W."/>
            <person name="Yuan L."/>
            <person name="Cao M."/>
            <person name="McDermott J."/>
            <person name="Samudrala R."/>
            <person name="Wang J."/>
            <person name="Wong G.K.-S."/>
            <person name="Yang H."/>
        </authorList>
    </citation>
    <scope>NUCLEOTIDE SEQUENCE [LARGE SCALE GENOMIC DNA]</scope>
    <source>
        <strain>cv. 93-11</strain>
    </source>
</reference>
<name>STAD5_ORYSI</name>
<evidence type="ECO:0000250" key="1">
    <source>
        <dbReference type="UniProtKB" id="P22337"/>
    </source>
</evidence>
<evidence type="ECO:0000255" key="2"/>
<evidence type="ECO:0000256" key="3">
    <source>
        <dbReference type="SAM" id="MobiDB-lite"/>
    </source>
</evidence>
<evidence type="ECO:0000305" key="4"/>
<protein>
    <recommendedName>
        <fullName>Stearoyl-[acyl-carrier-protein] 9-desaturase 5, chloroplastic</fullName>
        <shortName>Stearoyl-ACP desaturase 5</shortName>
        <ecNumber evidence="1">1.14.19.2</ecNumber>
    </recommendedName>
    <alternativeName>
        <fullName>Acyl-[acyl-carrier-protein] desaturase 5</fullName>
    </alternativeName>
</protein>
<sequence>MAFAPSHTASPSYCGVAQGGRRSNGMSPVVAMASTINRVKTAKKPYTPPREVHLQVKHSLPPQKREIFDSLQPWAKENLLNLLKPVEKSWQPQDFLPDPSSDGFYDEVKELRERAKEIPDDYFVCLVGDMVTEEALPTYQTMLNTLDGVRDETGASPTTWAVWTRAWTAEENRHGDLLNKYMYLTGRVDMKQIEKTIQYLIGSGMDPGTENNPYLGFLYTSFQERATFISHGNTARHAKEYGDLKLAQICGTIAADEKRHETAYTKIVEKLFEIDPDYTVLAFADMMRKKISMPAHLMYDGKDDNLFEHFSAVAQRLGVYTARDYADILEFLVQRWKVADLTGLSGEGRRAQDFVCTLAPRIRRLDERAQARAKQAPVIPFSWVYDRKVQL</sequence>
<comment type="function">
    <text evidence="1">Converts stearoyl-ACP to oleoyl-ACP by introduction of a cis double bond between carbons 9 and 10 of the acyl chain.</text>
</comment>
<comment type="catalytic activity">
    <reaction evidence="1">
        <text>octadecanoyl-[ACP] + 2 reduced [2Fe-2S]-[ferredoxin] + O2 + 2 H(+) = (9Z)-octadecenoyl-[ACP] + 2 oxidized [2Fe-2S]-[ferredoxin] + 2 H2O</text>
        <dbReference type="Rhea" id="RHEA:11776"/>
        <dbReference type="Rhea" id="RHEA-COMP:9656"/>
        <dbReference type="Rhea" id="RHEA-COMP:9924"/>
        <dbReference type="Rhea" id="RHEA-COMP:10000"/>
        <dbReference type="Rhea" id="RHEA-COMP:10001"/>
        <dbReference type="ChEBI" id="CHEBI:15377"/>
        <dbReference type="ChEBI" id="CHEBI:15378"/>
        <dbReference type="ChEBI" id="CHEBI:15379"/>
        <dbReference type="ChEBI" id="CHEBI:33737"/>
        <dbReference type="ChEBI" id="CHEBI:33738"/>
        <dbReference type="ChEBI" id="CHEBI:78495"/>
        <dbReference type="ChEBI" id="CHEBI:78783"/>
        <dbReference type="EC" id="1.14.19.2"/>
    </reaction>
</comment>
<comment type="cofactor">
    <cofactor evidence="1">
        <name>Fe(2+)</name>
        <dbReference type="ChEBI" id="CHEBI:29033"/>
    </cofactor>
    <text evidence="1">Binds 2 Fe(2+) ions per subunit.</text>
</comment>
<comment type="pathway">
    <text>Lipid metabolism; fatty acid metabolism.</text>
</comment>
<comment type="subunit">
    <text evidence="1">Homodimer.</text>
</comment>
<comment type="subcellular location">
    <subcellularLocation>
        <location evidence="4">Plastid</location>
        <location evidence="4">Chloroplast</location>
    </subcellularLocation>
</comment>
<comment type="similarity">
    <text evidence="4">Belongs to the fatty acid desaturase type 2 family.</text>
</comment>
<keyword id="KW-0150">Chloroplast</keyword>
<keyword id="KW-0275">Fatty acid biosynthesis</keyword>
<keyword id="KW-0276">Fatty acid metabolism</keyword>
<keyword id="KW-0408">Iron</keyword>
<keyword id="KW-0444">Lipid biosynthesis</keyword>
<keyword id="KW-0443">Lipid metabolism</keyword>
<keyword id="KW-0479">Metal-binding</keyword>
<keyword id="KW-0560">Oxidoreductase</keyword>
<keyword id="KW-0934">Plastid</keyword>
<keyword id="KW-1185">Reference proteome</keyword>
<keyword id="KW-0809">Transit peptide</keyword>
<dbReference type="EC" id="1.14.19.2" evidence="1"/>
<dbReference type="EMBL" id="CM000129">
    <property type="protein sequence ID" value="EAY93824.1"/>
    <property type="molecule type" value="Genomic_DNA"/>
</dbReference>
<dbReference type="SMR" id="A2XSL4"/>
<dbReference type="STRING" id="39946.A2XSL4"/>
<dbReference type="EnsemblPlants" id="BGIOSGA015217-TA">
    <property type="protein sequence ID" value="BGIOSGA015217-PA"/>
    <property type="gene ID" value="BGIOSGA015217"/>
</dbReference>
<dbReference type="EnsemblPlants" id="OsLaMu_04g0010890.01">
    <property type="protein sequence ID" value="OsLaMu_04g0010890.01"/>
    <property type="gene ID" value="OsLaMu_04g0010890"/>
</dbReference>
<dbReference type="EnsemblPlants" id="OsLima_04g0010650.01">
    <property type="protein sequence ID" value="OsLima_04g0010650.01"/>
    <property type="gene ID" value="OsLima_04g0010650"/>
</dbReference>
<dbReference type="Gramene" id="BGIOSGA015217-TA">
    <property type="protein sequence ID" value="BGIOSGA015217-PA"/>
    <property type="gene ID" value="BGIOSGA015217"/>
</dbReference>
<dbReference type="Gramene" id="OsLaMu_04g0010890.01">
    <property type="protein sequence ID" value="OsLaMu_04g0010890.01"/>
    <property type="gene ID" value="OsLaMu_04g0010890"/>
</dbReference>
<dbReference type="Gramene" id="OsLima_04g0010650.01">
    <property type="protein sequence ID" value="OsLima_04g0010650.01"/>
    <property type="gene ID" value="OsLima_04g0010650"/>
</dbReference>
<dbReference type="HOGENOM" id="CLU_034505_1_0_1"/>
<dbReference type="OMA" id="GMPNFRR"/>
<dbReference type="UniPathway" id="UPA00199"/>
<dbReference type="Proteomes" id="UP000007015">
    <property type="component" value="Chromosome 4"/>
</dbReference>
<dbReference type="GO" id="GO:0009570">
    <property type="term" value="C:chloroplast stroma"/>
    <property type="evidence" value="ECO:0007669"/>
    <property type="project" value="TreeGrafter"/>
</dbReference>
<dbReference type="GO" id="GO:0046872">
    <property type="term" value="F:metal ion binding"/>
    <property type="evidence" value="ECO:0007669"/>
    <property type="project" value="UniProtKB-KW"/>
</dbReference>
<dbReference type="GO" id="GO:0045300">
    <property type="term" value="F:stearoyl-[ACP] desaturase activity"/>
    <property type="evidence" value="ECO:0007669"/>
    <property type="project" value="UniProtKB-EC"/>
</dbReference>
<dbReference type="GO" id="GO:0006633">
    <property type="term" value="P:fatty acid biosynthetic process"/>
    <property type="evidence" value="ECO:0007669"/>
    <property type="project" value="UniProtKB-KW"/>
</dbReference>
<dbReference type="CDD" id="cd01050">
    <property type="entry name" value="Acyl_ACP_Desat"/>
    <property type="match status" value="1"/>
</dbReference>
<dbReference type="FunFam" id="1.10.620.20:FF:000002">
    <property type="entry name" value="Stearoyl-[acyl-carrier-protein] 9-desaturase, chloroplastic"/>
    <property type="match status" value="1"/>
</dbReference>
<dbReference type="Gene3D" id="1.10.620.20">
    <property type="entry name" value="Ribonucleotide Reductase, subunit A"/>
    <property type="match status" value="1"/>
</dbReference>
<dbReference type="InterPro" id="IPR005803">
    <property type="entry name" value="FADS-2_CS"/>
</dbReference>
<dbReference type="InterPro" id="IPR005067">
    <property type="entry name" value="Fatty_acid_desaturase-2"/>
</dbReference>
<dbReference type="InterPro" id="IPR009078">
    <property type="entry name" value="Ferritin-like_SF"/>
</dbReference>
<dbReference type="InterPro" id="IPR012348">
    <property type="entry name" value="RNR-like"/>
</dbReference>
<dbReference type="PANTHER" id="PTHR31155">
    <property type="entry name" value="ACYL- ACYL-CARRIER-PROTEIN DESATURASE-RELATED"/>
    <property type="match status" value="1"/>
</dbReference>
<dbReference type="PANTHER" id="PTHR31155:SF11">
    <property type="entry name" value="STEAROYL-[ACYL-CARRIER-PROTEIN] 9-DESATURASE 5, CHLOROPLASTIC"/>
    <property type="match status" value="1"/>
</dbReference>
<dbReference type="Pfam" id="PF03405">
    <property type="entry name" value="FA_desaturase_2"/>
    <property type="match status" value="1"/>
</dbReference>
<dbReference type="PIRSF" id="PIRSF000346">
    <property type="entry name" value="Dlt9_acylACP_des"/>
    <property type="match status" value="1"/>
</dbReference>
<dbReference type="SUPFAM" id="SSF47240">
    <property type="entry name" value="Ferritin-like"/>
    <property type="match status" value="1"/>
</dbReference>
<dbReference type="PROSITE" id="PS00574">
    <property type="entry name" value="FATTY_ACID_DESATUR_2"/>
    <property type="match status" value="1"/>
</dbReference>
<organism>
    <name type="scientific">Oryza sativa subsp. indica</name>
    <name type="common">Rice</name>
    <dbReference type="NCBI Taxonomy" id="39946"/>
    <lineage>
        <taxon>Eukaryota</taxon>
        <taxon>Viridiplantae</taxon>
        <taxon>Streptophyta</taxon>
        <taxon>Embryophyta</taxon>
        <taxon>Tracheophyta</taxon>
        <taxon>Spermatophyta</taxon>
        <taxon>Magnoliopsida</taxon>
        <taxon>Liliopsida</taxon>
        <taxon>Poales</taxon>
        <taxon>Poaceae</taxon>
        <taxon>BOP clade</taxon>
        <taxon>Oryzoideae</taxon>
        <taxon>Oryzeae</taxon>
        <taxon>Oryzinae</taxon>
        <taxon>Oryza</taxon>
        <taxon>Oryza sativa</taxon>
    </lineage>
</organism>